<gene>
    <name type="ordered locus">YN1551_1489</name>
</gene>
<dbReference type="EMBL" id="CP001404">
    <property type="protein sequence ID" value="ACP48579.1"/>
    <property type="molecule type" value="Genomic_DNA"/>
</dbReference>
<dbReference type="RefSeq" id="WP_010923074.1">
    <property type="nucleotide sequence ID" value="NC_012623.1"/>
</dbReference>
<dbReference type="SMR" id="C3NHG9"/>
<dbReference type="KEGG" id="sin:YN1551_1489"/>
<dbReference type="HOGENOM" id="CLU_165882_0_0_2"/>
<dbReference type="Proteomes" id="UP000006818">
    <property type="component" value="Chromosome"/>
</dbReference>
<dbReference type="Gene3D" id="1.20.1440.50">
    <property type="entry name" value="Ta0600-like"/>
    <property type="match status" value="1"/>
</dbReference>
<dbReference type="HAMAP" id="MF_00342">
    <property type="entry name" value="UPF0147"/>
    <property type="match status" value="1"/>
</dbReference>
<dbReference type="InterPro" id="IPR023130">
    <property type="entry name" value="Ta0600-like_sf"/>
</dbReference>
<dbReference type="InterPro" id="IPR005354">
    <property type="entry name" value="UPF0147"/>
</dbReference>
<dbReference type="NCBIfam" id="NF003319">
    <property type="entry name" value="PRK04330.1"/>
    <property type="match status" value="1"/>
</dbReference>
<dbReference type="Pfam" id="PF03685">
    <property type="entry name" value="UPF0147"/>
    <property type="match status" value="1"/>
</dbReference>
<dbReference type="SUPFAM" id="SSF158436">
    <property type="entry name" value="Ta0600-like"/>
    <property type="match status" value="1"/>
</dbReference>
<sequence length="89" mass="9820">MSMPYDNEAKIKQAVILLQKIVNDTSVPRNIRRAATDAIRNLQDLGLSPAVRAANAIGILEDISQDPNMPTHARISIWNVVSILETVKD</sequence>
<protein>
    <recommendedName>
        <fullName evidence="1">UPF0147 protein YN1551_1489</fullName>
    </recommendedName>
</protein>
<organism>
    <name type="scientific">Saccharolobus islandicus (strain Y.N.15.51 / Yellowstone #2)</name>
    <name type="common">Sulfolobus islandicus</name>
    <dbReference type="NCBI Taxonomy" id="419942"/>
    <lineage>
        <taxon>Archaea</taxon>
        <taxon>Thermoproteota</taxon>
        <taxon>Thermoprotei</taxon>
        <taxon>Sulfolobales</taxon>
        <taxon>Sulfolobaceae</taxon>
        <taxon>Saccharolobus</taxon>
    </lineage>
</organism>
<proteinExistence type="inferred from homology"/>
<feature type="chain" id="PRO_1000205280" description="UPF0147 protein YN1551_1489">
    <location>
        <begin position="1"/>
        <end position="89"/>
    </location>
</feature>
<comment type="similarity">
    <text evidence="1">Belongs to the UPF0147 family.</text>
</comment>
<accession>C3NHG9</accession>
<name>Y1489_SACI1</name>
<evidence type="ECO:0000255" key="1">
    <source>
        <dbReference type="HAMAP-Rule" id="MF_00342"/>
    </source>
</evidence>
<reference key="1">
    <citation type="journal article" date="2009" name="Proc. Natl. Acad. Sci. U.S.A.">
        <title>Biogeography of the Sulfolobus islandicus pan-genome.</title>
        <authorList>
            <person name="Reno M.L."/>
            <person name="Held N.L."/>
            <person name="Fields C.J."/>
            <person name="Burke P.V."/>
            <person name="Whitaker R.J."/>
        </authorList>
    </citation>
    <scope>NUCLEOTIDE SEQUENCE [LARGE SCALE GENOMIC DNA]</scope>
    <source>
        <strain>Y.N.15.51 / Yellowstone #2</strain>
    </source>
</reference>